<name>DCUP_BACHK</name>
<reference key="1">
    <citation type="journal article" date="2006" name="J. Bacteriol.">
        <title>Pathogenomic sequence analysis of Bacillus cereus and Bacillus thuringiensis isolates closely related to Bacillus anthracis.</title>
        <authorList>
            <person name="Han C.S."/>
            <person name="Xie G."/>
            <person name="Challacombe J.F."/>
            <person name="Altherr M.R."/>
            <person name="Bhotika S.S."/>
            <person name="Bruce D."/>
            <person name="Campbell C.S."/>
            <person name="Campbell M.L."/>
            <person name="Chen J."/>
            <person name="Chertkov O."/>
            <person name="Cleland C."/>
            <person name="Dimitrijevic M."/>
            <person name="Doggett N.A."/>
            <person name="Fawcett J.J."/>
            <person name="Glavina T."/>
            <person name="Goodwin L.A."/>
            <person name="Hill K.K."/>
            <person name="Hitchcock P."/>
            <person name="Jackson P.J."/>
            <person name="Keim P."/>
            <person name="Kewalramani A.R."/>
            <person name="Longmire J."/>
            <person name="Lucas S."/>
            <person name="Malfatti S."/>
            <person name="McMurry K."/>
            <person name="Meincke L.J."/>
            <person name="Misra M."/>
            <person name="Moseman B.L."/>
            <person name="Mundt M."/>
            <person name="Munk A.C."/>
            <person name="Okinaka R.T."/>
            <person name="Parson-Quintana B."/>
            <person name="Reilly L.P."/>
            <person name="Richardson P."/>
            <person name="Robinson D.L."/>
            <person name="Rubin E."/>
            <person name="Saunders E."/>
            <person name="Tapia R."/>
            <person name="Tesmer J.G."/>
            <person name="Thayer N."/>
            <person name="Thompson L.S."/>
            <person name="Tice H."/>
            <person name="Ticknor L.O."/>
            <person name="Wills P.L."/>
            <person name="Brettin T.S."/>
            <person name="Gilna P."/>
        </authorList>
    </citation>
    <scope>NUCLEOTIDE SEQUENCE [LARGE SCALE GENOMIC DNA]</scope>
    <source>
        <strain>97-27</strain>
    </source>
</reference>
<protein>
    <recommendedName>
        <fullName evidence="1">Uroporphyrinogen decarboxylase</fullName>
        <shortName evidence="1">UPD</shortName>
        <shortName evidence="1">URO-D</shortName>
        <ecNumber evidence="1">4.1.1.37</ecNumber>
    </recommendedName>
</protein>
<sequence length="348" mass="39212">MVRTINETFLKACRGERTDYVPAWYMRQAGRSQPEYRKIKEKYSLFEITHNPELCAYVTKLPVDQYNVDAAILYKDIMSPLPAIGVDVEIKSGIGPVIDNPIRSLQDVEKLGEINPEDDVPYILDTIRLLTTEMLDVPLIGFSGAPFTLASYMIEGGPSRNYHNTKAFMYAEPKAWFALMDKLADMVITYLKAQINAGAKAVQIFDSWVGTVNVADYRVFIKPAMERIFAEVRTMGVPMIMHGVGAAHLVNEWHDLPLDVVGLDWRLPIEEARARGVHKAVQGNMDPSFLLAPWSVIEEHVKGILDQGMKQPGYIFNLGHGVFPEVNPDTLKRLTTFIHEYSKGQLAK</sequence>
<evidence type="ECO:0000255" key="1">
    <source>
        <dbReference type="HAMAP-Rule" id="MF_00218"/>
    </source>
</evidence>
<dbReference type="EC" id="4.1.1.37" evidence="1"/>
<dbReference type="EMBL" id="AE017355">
    <property type="protein sequence ID" value="AAT62349.1"/>
    <property type="molecule type" value="Genomic_DNA"/>
</dbReference>
<dbReference type="RefSeq" id="WP_000252614.1">
    <property type="nucleotide sequence ID" value="NC_005957.1"/>
</dbReference>
<dbReference type="RefSeq" id="YP_035323.1">
    <property type="nucleotide sequence ID" value="NC_005957.1"/>
</dbReference>
<dbReference type="SMR" id="Q6HM98"/>
<dbReference type="GeneID" id="75084376"/>
<dbReference type="KEGG" id="btk:BT9727_0984"/>
<dbReference type="PATRIC" id="fig|281309.8.peg.1038"/>
<dbReference type="HOGENOM" id="CLU_040933_0_1_9"/>
<dbReference type="UniPathway" id="UPA00251">
    <property type="reaction ID" value="UER00321"/>
</dbReference>
<dbReference type="Proteomes" id="UP000001301">
    <property type="component" value="Chromosome"/>
</dbReference>
<dbReference type="GO" id="GO:0005829">
    <property type="term" value="C:cytosol"/>
    <property type="evidence" value="ECO:0007669"/>
    <property type="project" value="TreeGrafter"/>
</dbReference>
<dbReference type="GO" id="GO:0004853">
    <property type="term" value="F:uroporphyrinogen decarboxylase activity"/>
    <property type="evidence" value="ECO:0007669"/>
    <property type="project" value="UniProtKB-UniRule"/>
</dbReference>
<dbReference type="GO" id="GO:0006782">
    <property type="term" value="P:protoporphyrinogen IX biosynthetic process"/>
    <property type="evidence" value="ECO:0007669"/>
    <property type="project" value="UniProtKB-UniRule"/>
</dbReference>
<dbReference type="CDD" id="cd00717">
    <property type="entry name" value="URO-D"/>
    <property type="match status" value="1"/>
</dbReference>
<dbReference type="FunFam" id="3.20.20.210:FF:000005">
    <property type="entry name" value="Uroporphyrinogen decarboxylase"/>
    <property type="match status" value="1"/>
</dbReference>
<dbReference type="Gene3D" id="3.20.20.210">
    <property type="match status" value="1"/>
</dbReference>
<dbReference type="HAMAP" id="MF_00218">
    <property type="entry name" value="URO_D"/>
    <property type="match status" value="1"/>
</dbReference>
<dbReference type="InterPro" id="IPR038071">
    <property type="entry name" value="UROD/MetE-like_sf"/>
</dbReference>
<dbReference type="InterPro" id="IPR006361">
    <property type="entry name" value="Uroporphyrinogen_deCO2ase_HemE"/>
</dbReference>
<dbReference type="InterPro" id="IPR000257">
    <property type="entry name" value="Uroporphyrinogen_deCOase"/>
</dbReference>
<dbReference type="NCBIfam" id="TIGR01464">
    <property type="entry name" value="hemE"/>
    <property type="match status" value="1"/>
</dbReference>
<dbReference type="PANTHER" id="PTHR21091">
    <property type="entry name" value="METHYLTETRAHYDROFOLATE:HOMOCYSTEINE METHYLTRANSFERASE RELATED"/>
    <property type="match status" value="1"/>
</dbReference>
<dbReference type="PANTHER" id="PTHR21091:SF169">
    <property type="entry name" value="UROPORPHYRINOGEN DECARBOXYLASE"/>
    <property type="match status" value="1"/>
</dbReference>
<dbReference type="Pfam" id="PF01208">
    <property type="entry name" value="URO-D"/>
    <property type="match status" value="1"/>
</dbReference>
<dbReference type="SUPFAM" id="SSF51726">
    <property type="entry name" value="UROD/MetE-like"/>
    <property type="match status" value="1"/>
</dbReference>
<dbReference type="PROSITE" id="PS00906">
    <property type="entry name" value="UROD_1"/>
    <property type="match status" value="1"/>
</dbReference>
<dbReference type="PROSITE" id="PS00907">
    <property type="entry name" value="UROD_2"/>
    <property type="match status" value="1"/>
</dbReference>
<accession>Q6HM98</accession>
<organism>
    <name type="scientific">Bacillus thuringiensis subsp. konkukian (strain 97-27)</name>
    <dbReference type="NCBI Taxonomy" id="281309"/>
    <lineage>
        <taxon>Bacteria</taxon>
        <taxon>Bacillati</taxon>
        <taxon>Bacillota</taxon>
        <taxon>Bacilli</taxon>
        <taxon>Bacillales</taxon>
        <taxon>Bacillaceae</taxon>
        <taxon>Bacillus</taxon>
        <taxon>Bacillus cereus group</taxon>
    </lineage>
</organism>
<proteinExistence type="inferred from homology"/>
<gene>
    <name evidence="1" type="primary">hemE</name>
    <name type="ordered locus">BT9727_0984</name>
</gene>
<keyword id="KW-0963">Cytoplasm</keyword>
<keyword id="KW-0210">Decarboxylase</keyword>
<keyword id="KW-0456">Lyase</keyword>
<keyword id="KW-0627">Porphyrin biosynthesis</keyword>
<feature type="chain" id="PRO_1000023875" description="Uroporphyrinogen decarboxylase">
    <location>
        <begin position="1"/>
        <end position="348"/>
    </location>
</feature>
<feature type="binding site" evidence="1">
    <location>
        <begin position="27"/>
        <end position="31"/>
    </location>
    <ligand>
        <name>substrate</name>
    </ligand>
</feature>
<feature type="binding site" evidence="1">
    <location>
        <position position="46"/>
    </location>
    <ligand>
        <name>substrate</name>
    </ligand>
</feature>
<feature type="binding site" evidence="1">
    <location>
        <position position="76"/>
    </location>
    <ligand>
        <name>substrate</name>
    </ligand>
</feature>
<feature type="binding site" evidence="1">
    <location>
        <position position="152"/>
    </location>
    <ligand>
        <name>substrate</name>
    </ligand>
</feature>
<feature type="binding site" evidence="1">
    <location>
        <position position="207"/>
    </location>
    <ligand>
        <name>substrate</name>
    </ligand>
</feature>
<feature type="binding site" evidence="1">
    <location>
        <position position="320"/>
    </location>
    <ligand>
        <name>substrate</name>
    </ligand>
</feature>
<feature type="site" description="Transition state stabilizer" evidence="1">
    <location>
        <position position="76"/>
    </location>
</feature>
<comment type="function">
    <text evidence="1">Catalyzes the decarboxylation of four acetate groups of uroporphyrinogen-III to yield coproporphyrinogen-III.</text>
</comment>
<comment type="catalytic activity">
    <reaction evidence="1">
        <text>uroporphyrinogen III + 4 H(+) = coproporphyrinogen III + 4 CO2</text>
        <dbReference type="Rhea" id="RHEA:19865"/>
        <dbReference type="ChEBI" id="CHEBI:15378"/>
        <dbReference type="ChEBI" id="CHEBI:16526"/>
        <dbReference type="ChEBI" id="CHEBI:57308"/>
        <dbReference type="ChEBI" id="CHEBI:57309"/>
        <dbReference type="EC" id="4.1.1.37"/>
    </reaction>
</comment>
<comment type="pathway">
    <text evidence="1">Porphyrin-containing compound metabolism; protoporphyrin-IX biosynthesis; coproporphyrinogen-III from 5-aminolevulinate: step 4/4.</text>
</comment>
<comment type="subunit">
    <text evidence="1">Homodimer.</text>
</comment>
<comment type="subcellular location">
    <subcellularLocation>
        <location evidence="1">Cytoplasm</location>
    </subcellularLocation>
</comment>
<comment type="similarity">
    <text evidence="1">Belongs to the uroporphyrinogen decarboxylase family.</text>
</comment>